<accession>Q9ERH7</accession>
<accession>A2AQH2</accession>
<accession>O88906</accession>
<accession>Q9QZR2</accession>
<reference key="1">
    <citation type="journal article" date="1998" name="J. Biol. Chem.">
        <title>Homeodomain-interacting protein kinases, a novel family of co-repressors for homeodomain transcription factors.</title>
        <authorList>
            <person name="Kim Y.H."/>
            <person name="Choi C.Y."/>
            <person name="Lee S.-J."/>
            <person name="Conti M.A."/>
            <person name="Kim Y."/>
        </authorList>
    </citation>
    <scope>NUCLEOTIDE SEQUENCE [MRNA]</scope>
    <scope>INTERACTION WITH NKX1-2</scope>
    <source>
        <strain>BALB/cJ</strain>
    </source>
</reference>
<reference key="2">
    <citation type="journal article" date="2000" name="J. Exp. Med.">
        <title>FIST/HIPK3: a Fas/FADD-interacting serine/threonine kinase that induces FADD phosphorylation and inhibits Fas-mediated Jun NH2-terminal kinase activation.</title>
        <authorList>
            <person name="Rochat-Steiner V."/>
            <person name="Becker K."/>
            <person name="Micheau O."/>
            <person name="Schneider P."/>
            <person name="Burns K."/>
            <person name="Tschopp J."/>
        </authorList>
    </citation>
    <scope>NUCLEOTIDE SEQUENCE [MRNA]</scope>
    <scope>INTERACTION WITH FAS AND DAXX</scope>
    <scope>IDENTIFICATION IN A COMPLEX WITH FAS AND FADD</scope>
    <scope>TISSUE SPECIFICITY</scope>
    <scope>SUBCELLULAR LOCATION</scope>
    <scope>FUNCTION</scope>
    <scope>MUTAGENESIS OF LYS-226 AND ASP-322</scope>
    <source>
        <strain>CD-1</strain>
        <tissue>Testis</tissue>
    </source>
</reference>
<reference key="3">
    <citation type="submission" date="1999-07" db="EMBL/GenBank/DDBJ databases">
        <title>Protein kinases associated with PML/CBP nuclear bodies and filamentous threads regulate transcription and inhibit cell growth.</title>
        <authorList>
            <person name="Sather S.L."/>
            <person name="Johnson N.L."/>
            <person name="Johnson G.L."/>
        </authorList>
    </citation>
    <scope>NUCLEOTIDE SEQUENCE [MRNA]</scope>
</reference>
<reference key="4">
    <citation type="journal article" date="2009" name="PLoS Biol.">
        <title>Lineage-specific biology revealed by a finished genome assembly of the mouse.</title>
        <authorList>
            <person name="Church D.M."/>
            <person name="Goodstadt L."/>
            <person name="Hillier L.W."/>
            <person name="Zody M.C."/>
            <person name="Goldstein S."/>
            <person name="She X."/>
            <person name="Bult C.J."/>
            <person name="Agarwala R."/>
            <person name="Cherry J.L."/>
            <person name="DiCuccio M."/>
            <person name="Hlavina W."/>
            <person name="Kapustin Y."/>
            <person name="Meric P."/>
            <person name="Maglott D."/>
            <person name="Birtle Z."/>
            <person name="Marques A.C."/>
            <person name="Graves T."/>
            <person name="Zhou S."/>
            <person name="Teague B."/>
            <person name="Potamousis K."/>
            <person name="Churas C."/>
            <person name="Place M."/>
            <person name="Herschleb J."/>
            <person name="Runnheim R."/>
            <person name="Forrest D."/>
            <person name="Amos-Landgraf J."/>
            <person name="Schwartz D.C."/>
            <person name="Cheng Z."/>
            <person name="Lindblad-Toh K."/>
            <person name="Eichler E.E."/>
            <person name="Ponting C.P."/>
        </authorList>
    </citation>
    <scope>NUCLEOTIDE SEQUENCE [LARGE SCALE GENOMIC DNA]</scope>
    <source>
        <strain>C57BL/6J</strain>
    </source>
</reference>
<reference key="5">
    <citation type="journal article" date="1998" name="Mol. Biol. Cell">
        <title>Activation of androgen receptor function by a novel nuclear protein kinase.</title>
        <authorList>
            <person name="Moilanen A.-M."/>
            <person name="Karvonen U."/>
            <person name="Poukka H."/>
            <person name="Jaenne O.A."/>
            <person name="Palvimo J.J."/>
        </authorList>
    </citation>
    <scope>INTERACTION WITH AR</scope>
    <scope>SUBCELLULAR LOCATION</scope>
</reference>
<reference key="6">
    <citation type="journal article" date="2007" name="Mol. Cell. Biol.">
        <title>Cyclic AMP stimulates SF-1-dependent CYP11A1 expression through homeodomain-interacting protein kinase 3-mediated Jun N-terminal kinase and c-Jun phosphorylation.</title>
        <authorList>
            <person name="Lan H.-C."/>
            <person name="Li H.-J."/>
            <person name="Lin G."/>
            <person name="Lai P.-Y."/>
            <person name="Chung B.-C."/>
        </authorList>
    </citation>
    <scope>FUNCTION AS KINASE AND IN CAMP SIGNALING PATHWAY</scope>
    <scope>INTERACTION WITH NR5A1/SF1</scope>
    <scope>MUTAGENESIS OF LYS-226</scope>
</reference>
<reference key="7">
    <citation type="journal article" date="2008" name="J. Proteome Res.">
        <title>Large-scale identification and evolution indexing of tyrosine phosphorylation sites from murine brain.</title>
        <authorList>
            <person name="Ballif B.A."/>
            <person name="Carey G.R."/>
            <person name="Sunyaev S.R."/>
            <person name="Gygi S.P."/>
        </authorList>
    </citation>
    <scope>PHOSPHORYLATION [LARGE SCALE ANALYSIS] AT TYR-359</scope>
    <scope>IDENTIFICATION BY MASS SPECTROMETRY [LARGE SCALE ANALYSIS]</scope>
    <source>
        <tissue>Brain</tissue>
    </source>
</reference>
<reference key="8">
    <citation type="journal article" date="2010" name="Cell">
        <title>A tissue-specific atlas of mouse protein phosphorylation and expression.</title>
        <authorList>
            <person name="Huttlin E.L."/>
            <person name="Jedrychowski M.P."/>
            <person name="Elias J.E."/>
            <person name="Goswami T."/>
            <person name="Rad R."/>
            <person name="Beausoleil S.A."/>
            <person name="Villen J."/>
            <person name="Haas W."/>
            <person name="Sowa M.E."/>
            <person name="Gygi S.P."/>
        </authorList>
    </citation>
    <scope>PHOSPHORYLATION [LARGE SCALE ANALYSIS] AT TYR-359</scope>
    <scope>IDENTIFICATION BY MASS SPECTROMETRY [LARGE SCALE ANALYSIS]</scope>
    <source>
        <tissue>Kidney</tissue>
        <tissue>Testis</tissue>
    </source>
</reference>
<reference key="9">
    <citation type="journal article" date="2010" name="Mol. Endocrinol.">
        <title>Runx2 trans-activation mediated by the MSX2-interacting nuclear target requires homeodomain interacting protein kinase-3.</title>
        <authorList>
            <person name="Sierra O.L."/>
            <person name="Towler D.A."/>
        </authorList>
    </citation>
    <scope>FUNCTION AS RUNX2 KINASE</scope>
    <scope>INTERACTION WITH RUNX2 AND SPEN/MINT</scope>
</reference>
<protein>
    <recommendedName>
        <fullName>Homeodomain-interacting protein kinase 3</fullName>
        <ecNumber>2.7.11.1</ecNumber>
    </recommendedName>
    <alternativeName>
        <fullName>Androgen receptor-interacting nuclear protein kinase</fullName>
        <shortName>ANPK</shortName>
    </alternativeName>
    <alternativeName>
        <fullName>Fas-interacting serine/threonine-protein kinase</fullName>
        <shortName>FIST</shortName>
    </alternativeName>
    <alternativeName>
        <fullName>Nuclear body-associated kinase 3</fullName>
        <shortName>Nbak3</shortName>
    </alternativeName>
</protein>
<sequence length="1192" mass="130081">MASQVLVYPPYVYQTQSSAFCSVKKLKVEPSGCVFQERTYPQIHVNGRNFGNSHPSTKGSAFQTKIPFTKPRGHSFSLQAGAIVVKDTAGATKVLAAQAQQAGVEAPRAVVWRNRLHFLEGPQRCGLKRKSEELENHSGAMQIVDELSILPAMLQTNMGNPVTVVTATTGSKQNCTSGEGDYQLVQHEVLCSMKNTYEVLDFLGRGTFGQVVKCWKRGTNEIVAIKILKNHPSYARQGQIEVSILARLSTENADEYNFVRAYECFQHRNHTCLVFEMLEQNLYDFLKQNKFSPLPLKVIRPVLQQVATALKKLKSLGLIHADLKPENIMLVDPVRQPYRVKVIDFGSASHVSKTVCSTYLQSRYYRAPEIILGLPFCEAIDMWSLGCVIAELFLGWPLYPGALEYDQIRYISQTQGLPGEQLLNVGTKSTRFFCRETDMSHSGWRLKTLEEHEAETGMKSKEARKYIFNSLDDIVHVNTVMDLEGGDLLAEKADRREFVNLLKKMLLIDADLRITPIETLNHPFVNMKHLLDFPHSNHVKSCFHIMDICKSPSSCETNNHSKMSLLRPVASNGTAALAANFTKVGTLRSQALTTSAHSVVHHGIPLQAGTAQFGCGDAFHQTLIICPPAIQGIPAAHGKPTSYSIRVDNTVPLVTQAPAVQPLQIRPGVLSQQTWSGRTQQMLIPAWQQVTPMAPAAATLTSEGMAGSQRLGDWGKMIPHSNHYNSVMPPPLLTNQITLSAPQPISVGIAHVVWPQPATTKKNKLCQNRSNSLQNTNIPHSAFISPKIISGKEVEEVSCVDTQDNHTSEGEAGTCREASVRQDSSVSDKQRQTIIIADSPSPAVSVITISSDSDDEETSPRPSLRECKGSLDCEACQSTLNIDRMCSLSSPDSTLSTSSSGQSSPSPCKRPNSMSDDEQESGCETVDGSPTSDSSGHDSPFAENSFVEDAHQNTELGTCAGPEAKPAVGTAVEPPVGRESGLSVDEHMANTDSTCQPLRKGQPAPGKLHQPPALGARQQKPAAAFPQQHLNLSQVQHFGTGHQEWNGNFGHRRQQAYIPTSVTSNPFTLSHGSPNHTAVHAHLAGSTHLGGQPTLLPYPSSASLSSAAPVAHLLASPCTSRPMLQHPTYNISHPSGIVHQVPVGINPRLLPSPTIHQTQYKPIFPPHSYIAASPAYTGFPLSPTKLSQYPYM</sequence>
<keyword id="KW-0053">Apoptosis</keyword>
<keyword id="KW-0067">ATP-binding</keyword>
<keyword id="KW-0963">Cytoplasm</keyword>
<keyword id="KW-1017">Isopeptide bond</keyword>
<keyword id="KW-0418">Kinase</keyword>
<keyword id="KW-0547">Nucleotide-binding</keyword>
<keyword id="KW-0539">Nucleus</keyword>
<keyword id="KW-0597">Phosphoprotein</keyword>
<keyword id="KW-1185">Reference proteome</keyword>
<keyword id="KW-0723">Serine/threonine-protein kinase</keyword>
<keyword id="KW-0804">Transcription</keyword>
<keyword id="KW-0805">Transcription regulation</keyword>
<keyword id="KW-0808">Transferase</keyword>
<keyword id="KW-0832">Ubl conjugation</keyword>
<dbReference type="EC" id="2.7.11.1"/>
<dbReference type="EMBL" id="AF077660">
    <property type="protein sequence ID" value="AAC63012.1"/>
    <property type="molecule type" value="mRNA"/>
</dbReference>
<dbReference type="EMBL" id="AF305238">
    <property type="protein sequence ID" value="AAG25989.1"/>
    <property type="molecule type" value="mRNA"/>
</dbReference>
<dbReference type="EMBL" id="AF170305">
    <property type="protein sequence ID" value="AAD52570.1"/>
    <property type="molecule type" value="mRNA"/>
</dbReference>
<dbReference type="EMBL" id="AL844591">
    <property type="status" value="NOT_ANNOTATED_CDS"/>
    <property type="molecule type" value="Genomic_DNA"/>
</dbReference>
<dbReference type="CCDS" id="CCDS16489.1"/>
<dbReference type="PIR" id="T17089">
    <property type="entry name" value="T17089"/>
</dbReference>
<dbReference type="RefSeq" id="NP_034564.2">
    <property type="nucleotide sequence ID" value="NM_010434.2"/>
</dbReference>
<dbReference type="SMR" id="Q9ERH7"/>
<dbReference type="BioGRID" id="200308">
    <property type="interactions" value="1"/>
</dbReference>
<dbReference type="FunCoup" id="Q9ERH7">
    <property type="interactions" value="3210"/>
</dbReference>
<dbReference type="IntAct" id="Q9ERH7">
    <property type="interactions" value="3"/>
</dbReference>
<dbReference type="STRING" id="10090.ENSMUSP00000028600"/>
<dbReference type="iPTMnet" id="Q9ERH7"/>
<dbReference type="PhosphoSitePlus" id="Q9ERH7"/>
<dbReference type="PaxDb" id="10090-ENSMUSP00000028600"/>
<dbReference type="ProteomicsDB" id="269753"/>
<dbReference type="Antibodypedia" id="25715">
    <property type="antibodies" value="208 antibodies from 28 providers"/>
</dbReference>
<dbReference type="DNASU" id="15259"/>
<dbReference type="Ensembl" id="ENSMUST00000028600.14">
    <property type="protein sequence ID" value="ENSMUSP00000028600.8"/>
    <property type="gene ID" value="ENSMUSG00000027177.15"/>
</dbReference>
<dbReference type="Ensembl" id="ENSMUST00000111124.8">
    <property type="protein sequence ID" value="ENSMUSP00000106753.2"/>
    <property type="gene ID" value="ENSMUSG00000027177.15"/>
</dbReference>
<dbReference type="GeneID" id="15259"/>
<dbReference type="KEGG" id="mmu:15259"/>
<dbReference type="UCSC" id="uc008lju.2">
    <property type="organism name" value="mouse"/>
</dbReference>
<dbReference type="AGR" id="MGI:1314882"/>
<dbReference type="CTD" id="10114"/>
<dbReference type="MGI" id="MGI:1314882">
    <property type="gene designation" value="Hipk3"/>
</dbReference>
<dbReference type="VEuPathDB" id="HostDB:ENSMUSG00000027177"/>
<dbReference type="eggNOG" id="KOG0667">
    <property type="taxonomic scope" value="Eukaryota"/>
</dbReference>
<dbReference type="GeneTree" id="ENSGT00940000155960"/>
<dbReference type="HOGENOM" id="CLU_003045_2_0_1"/>
<dbReference type="InParanoid" id="Q9ERH7"/>
<dbReference type="OMA" id="GIAHVIW"/>
<dbReference type="OrthoDB" id="22629at9989"/>
<dbReference type="TreeFam" id="TF105417"/>
<dbReference type="BioGRID-ORCS" id="15259">
    <property type="hits" value="6 hits in 85 CRISPR screens"/>
</dbReference>
<dbReference type="ChiTaRS" id="Hipk3">
    <property type="organism name" value="mouse"/>
</dbReference>
<dbReference type="PRO" id="PR:Q9ERH7"/>
<dbReference type="Proteomes" id="UP000000589">
    <property type="component" value="Chromosome 2"/>
</dbReference>
<dbReference type="RNAct" id="Q9ERH7">
    <property type="molecule type" value="protein"/>
</dbReference>
<dbReference type="Bgee" id="ENSMUSG00000027177">
    <property type="expression patterns" value="Expressed in vastus lateralis and 247 other cell types or tissues"/>
</dbReference>
<dbReference type="ExpressionAtlas" id="Q9ERH7">
    <property type="expression patterns" value="baseline and differential"/>
</dbReference>
<dbReference type="GO" id="GO:0005737">
    <property type="term" value="C:cytoplasm"/>
    <property type="evidence" value="ECO:0000314"/>
    <property type="project" value="UniProtKB"/>
</dbReference>
<dbReference type="GO" id="GO:0005634">
    <property type="term" value="C:nucleus"/>
    <property type="evidence" value="ECO:0000250"/>
    <property type="project" value="UniProtKB"/>
</dbReference>
<dbReference type="GO" id="GO:0016605">
    <property type="term" value="C:PML body"/>
    <property type="evidence" value="ECO:0000314"/>
    <property type="project" value="UniProtKB"/>
</dbReference>
<dbReference type="GO" id="GO:0005524">
    <property type="term" value="F:ATP binding"/>
    <property type="evidence" value="ECO:0007669"/>
    <property type="project" value="UniProtKB-KW"/>
</dbReference>
<dbReference type="GO" id="GO:0004672">
    <property type="term" value="F:protein kinase activity"/>
    <property type="evidence" value="ECO:0000250"/>
    <property type="project" value="UniProtKB"/>
</dbReference>
<dbReference type="GO" id="GO:0106310">
    <property type="term" value="F:protein serine kinase activity"/>
    <property type="evidence" value="ECO:0007669"/>
    <property type="project" value="RHEA"/>
</dbReference>
<dbReference type="GO" id="GO:0004674">
    <property type="term" value="F:protein serine/threonine kinase activity"/>
    <property type="evidence" value="ECO:0000314"/>
    <property type="project" value="UniProtKB"/>
</dbReference>
<dbReference type="GO" id="GO:0003714">
    <property type="term" value="F:transcription corepressor activity"/>
    <property type="evidence" value="ECO:0000250"/>
    <property type="project" value="UniProtKB"/>
</dbReference>
<dbReference type="GO" id="GO:0006915">
    <property type="term" value="P:apoptotic process"/>
    <property type="evidence" value="ECO:0007669"/>
    <property type="project" value="UniProtKB-KW"/>
</dbReference>
<dbReference type="GO" id="GO:0043508">
    <property type="term" value="P:negative regulation of JUN kinase activity"/>
    <property type="evidence" value="ECO:0000315"/>
    <property type="project" value="UniProtKB"/>
</dbReference>
<dbReference type="GO" id="GO:0000122">
    <property type="term" value="P:negative regulation of transcription by RNA polymerase II"/>
    <property type="evidence" value="ECO:0000250"/>
    <property type="project" value="UniProtKB"/>
</dbReference>
<dbReference type="GO" id="GO:0018105">
    <property type="term" value="P:peptidyl-serine phosphorylation"/>
    <property type="evidence" value="ECO:0000314"/>
    <property type="project" value="UniProtKB"/>
</dbReference>
<dbReference type="GO" id="GO:0018107">
    <property type="term" value="P:peptidyl-threonine phosphorylation"/>
    <property type="evidence" value="ECO:0000314"/>
    <property type="project" value="UniProtKB"/>
</dbReference>
<dbReference type="GO" id="GO:0043388">
    <property type="term" value="P:positive regulation of DNA binding"/>
    <property type="evidence" value="ECO:0000250"/>
    <property type="project" value="UniProtKB"/>
</dbReference>
<dbReference type="GO" id="GO:0006468">
    <property type="term" value="P:protein phosphorylation"/>
    <property type="evidence" value="ECO:0000250"/>
    <property type="project" value="UniProtKB"/>
</dbReference>
<dbReference type="FunFam" id="1.10.510.10:FF:000029">
    <property type="entry name" value="Homeodomain-interacting protein kinase 2 isoform 1"/>
    <property type="match status" value="1"/>
</dbReference>
<dbReference type="FunFam" id="3.30.200.20:FF:000022">
    <property type="entry name" value="Homeodomain-interacting protein kinase 2 isoform 1"/>
    <property type="match status" value="1"/>
</dbReference>
<dbReference type="Gene3D" id="3.30.200.20">
    <property type="entry name" value="Phosphorylase Kinase, domain 1"/>
    <property type="match status" value="1"/>
</dbReference>
<dbReference type="Gene3D" id="1.10.510.10">
    <property type="entry name" value="Transferase(Phosphotransferase) domain 1"/>
    <property type="match status" value="1"/>
</dbReference>
<dbReference type="InterPro" id="IPR011009">
    <property type="entry name" value="Kinase-like_dom_sf"/>
</dbReference>
<dbReference type="InterPro" id="IPR000719">
    <property type="entry name" value="Prot_kinase_dom"/>
</dbReference>
<dbReference type="InterPro" id="IPR017441">
    <property type="entry name" value="Protein_kinase_ATP_BS"/>
</dbReference>
<dbReference type="InterPro" id="IPR008271">
    <property type="entry name" value="Ser/Thr_kinase_AS"/>
</dbReference>
<dbReference type="InterPro" id="IPR050494">
    <property type="entry name" value="Ser_Thr_dual-spec_kinase"/>
</dbReference>
<dbReference type="PANTHER" id="PTHR24058">
    <property type="entry name" value="DUAL SPECIFICITY PROTEIN KINASE"/>
    <property type="match status" value="1"/>
</dbReference>
<dbReference type="PANTHER" id="PTHR24058:SF45">
    <property type="entry name" value="HOMEODOMAIN-INTERACTING PROTEIN KINASE 3"/>
    <property type="match status" value="1"/>
</dbReference>
<dbReference type="Pfam" id="PF00069">
    <property type="entry name" value="Pkinase"/>
    <property type="match status" value="1"/>
</dbReference>
<dbReference type="SMART" id="SM00220">
    <property type="entry name" value="S_TKc"/>
    <property type="match status" value="1"/>
</dbReference>
<dbReference type="SUPFAM" id="SSF56112">
    <property type="entry name" value="Protein kinase-like (PK-like)"/>
    <property type="match status" value="1"/>
</dbReference>
<dbReference type="PROSITE" id="PS00107">
    <property type="entry name" value="PROTEIN_KINASE_ATP"/>
    <property type="match status" value="1"/>
</dbReference>
<dbReference type="PROSITE" id="PS50011">
    <property type="entry name" value="PROTEIN_KINASE_DOM"/>
    <property type="match status" value="1"/>
</dbReference>
<dbReference type="PROSITE" id="PS00108">
    <property type="entry name" value="PROTEIN_KINASE_ST"/>
    <property type="match status" value="1"/>
</dbReference>
<proteinExistence type="evidence at protein level"/>
<organism>
    <name type="scientific">Mus musculus</name>
    <name type="common">Mouse</name>
    <dbReference type="NCBI Taxonomy" id="10090"/>
    <lineage>
        <taxon>Eukaryota</taxon>
        <taxon>Metazoa</taxon>
        <taxon>Chordata</taxon>
        <taxon>Craniata</taxon>
        <taxon>Vertebrata</taxon>
        <taxon>Euteleostomi</taxon>
        <taxon>Mammalia</taxon>
        <taxon>Eutheria</taxon>
        <taxon>Euarchontoglires</taxon>
        <taxon>Glires</taxon>
        <taxon>Rodentia</taxon>
        <taxon>Myomorpha</taxon>
        <taxon>Muroidea</taxon>
        <taxon>Muridae</taxon>
        <taxon>Murinae</taxon>
        <taxon>Mus</taxon>
        <taxon>Mus</taxon>
    </lineage>
</organism>
<name>HIPK3_MOUSE</name>
<feature type="chain" id="PRO_0000085999" description="Homeodomain-interacting protein kinase 3">
    <location>
        <begin position="1"/>
        <end position="1192"/>
    </location>
</feature>
<feature type="domain" description="Protein kinase" evidence="3">
    <location>
        <begin position="197"/>
        <end position="525"/>
    </location>
</feature>
<feature type="region of interest" description="Interaction with AR" evidence="1">
    <location>
        <begin position="767"/>
        <end position="921"/>
    </location>
</feature>
<feature type="region of interest" description="Interaction with FAS" evidence="6">
    <location>
        <begin position="775"/>
        <end position="868"/>
    </location>
</feature>
<feature type="region of interest" description="Disordered" evidence="5">
    <location>
        <begin position="799"/>
        <end position="829"/>
    </location>
</feature>
<feature type="region of interest" description="Required for localization to nuclear speckles" evidence="1">
    <location>
        <begin position="832"/>
        <end position="988"/>
    </location>
</feature>
<feature type="region of interest" description="SUMO interaction motifs (SIM); required for nuclear localization and kinase activity" evidence="1">
    <location>
        <begin position="843"/>
        <end position="895"/>
    </location>
</feature>
<feature type="region of interest" description="Interaction with UBL1" evidence="1">
    <location>
        <begin position="847"/>
        <end position="857"/>
    </location>
</feature>
<feature type="region of interest" description="Disordered" evidence="5">
    <location>
        <begin position="889"/>
        <end position="943"/>
    </location>
</feature>
<feature type="region of interest" description="Disordered" evidence="5">
    <location>
        <begin position="956"/>
        <end position="1023"/>
    </location>
</feature>
<feature type="compositionally biased region" description="Low complexity" evidence="5">
    <location>
        <begin position="889"/>
        <end position="906"/>
    </location>
</feature>
<feature type="active site" description="Proton acceptor" evidence="3 4">
    <location>
        <position position="322"/>
    </location>
</feature>
<feature type="binding site" evidence="3">
    <location>
        <begin position="203"/>
        <end position="211"/>
    </location>
    <ligand>
        <name>ATP</name>
        <dbReference type="ChEBI" id="CHEBI:30616"/>
    </ligand>
</feature>
<feature type="binding site" evidence="3">
    <location>
        <position position="226"/>
    </location>
    <ligand>
        <name>ATP</name>
        <dbReference type="ChEBI" id="CHEBI:30616"/>
    </ligand>
</feature>
<feature type="modified residue" description="Phosphotyrosine" evidence="12 13">
    <location>
        <position position="359"/>
    </location>
</feature>
<feature type="cross-link" description="Glycyl lysine isopeptide (Lys-Gly) (interchain with G-Cter in SUMO); alternate" evidence="1">
    <location>
        <position position="27"/>
    </location>
</feature>
<feature type="cross-link" description="Glycyl lysine isopeptide (Lys-Gly) (interchain with G-Cter in SUMO2); alternate" evidence="2">
    <location>
        <position position="27"/>
    </location>
</feature>
<feature type="cross-link" description="Glycyl lysine isopeptide (Lys-Gly) (interchain with G-Cter in SUMO)" evidence="1">
    <location>
        <position position="1185"/>
    </location>
</feature>
<feature type="mutagenesis site" description="Loss of kinase activity and impaired activation of SF1." evidence="6 7">
    <original>K</original>
    <variation>R</variation>
    <location>
        <position position="226"/>
    </location>
</feature>
<feature type="mutagenesis site" description="Impairs catalytic activity." evidence="6 7">
    <original>K</original>
    <variation>S</variation>
    <location>
        <position position="226"/>
    </location>
</feature>
<feature type="mutagenesis site" description="Impairs catalytic activity and abolishes interaction with DAXX." evidence="6">
    <original>D</original>
    <variation>N</variation>
    <location>
        <position position="322"/>
    </location>
</feature>
<feature type="sequence conflict" description="In Ref. 1; AAC63012." evidence="11" ref="1">
    <original>K</original>
    <variation>N</variation>
    <location>
        <position position="65"/>
    </location>
</feature>
<feature type="sequence conflict" description="In Ref. 1; AAC63012." evidence="11" ref="1">
    <original>Y</original>
    <variation>H</variation>
    <location>
        <position position="405"/>
    </location>
</feature>
<feature type="sequence conflict" description="In Ref. 1; AAC63012, 2; AAG25989 and 3; AAD52570." evidence="11" ref="1 2 3">
    <original>G</original>
    <variation>R</variation>
    <location>
        <position position="813"/>
    </location>
</feature>
<feature type="sequence conflict" description="In Ref. 1; AAC63012 and 3; AAD52570." evidence="11" ref="1 3">
    <original>D</original>
    <variation>G</variation>
    <location>
        <position position="985"/>
    </location>
</feature>
<feature type="sequence conflict" description="In Ref. 1; AAC63012." evidence="11" ref="1">
    <original>A</original>
    <variation>D</variation>
    <location>
        <position position="1084"/>
    </location>
</feature>
<feature type="sequence conflict" description="In Ref. 1; AAC63012." evidence="11" ref="1">
    <original>L</original>
    <variation>V</variation>
    <location>
        <position position="1186"/>
    </location>
</feature>
<evidence type="ECO:0000250" key="1"/>
<evidence type="ECO:0000250" key="2">
    <source>
        <dbReference type="UniProtKB" id="Q9H422"/>
    </source>
</evidence>
<evidence type="ECO:0000255" key="3">
    <source>
        <dbReference type="PROSITE-ProRule" id="PRU00159"/>
    </source>
</evidence>
<evidence type="ECO:0000255" key="4">
    <source>
        <dbReference type="PROSITE-ProRule" id="PRU10027"/>
    </source>
</evidence>
<evidence type="ECO:0000256" key="5">
    <source>
        <dbReference type="SAM" id="MobiDB-lite"/>
    </source>
</evidence>
<evidence type="ECO:0000269" key="6">
    <source>
    </source>
</evidence>
<evidence type="ECO:0000269" key="7">
    <source>
    </source>
</evidence>
<evidence type="ECO:0000269" key="8">
    <source>
    </source>
</evidence>
<evidence type="ECO:0000269" key="9">
    <source>
    </source>
</evidence>
<evidence type="ECO:0000269" key="10">
    <source>
    </source>
</evidence>
<evidence type="ECO:0000305" key="11"/>
<evidence type="ECO:0007744" key="12">
    <source>
    </source>
</evidence>
<evidence type="ECO:0007744" key="13">
    <source>
    </source>
</evidence>
<comment type="function">
    <text evidence="6 7 8">Serine/threonine-protein kinase involved in transcription regulation, apoptosis and steroidogenic gene expression. Phosphorylates JUN and RUNX2. Seems to negatively regulate apoptosis by promoting FADD phosphorylation. Enhances androgen receptor-mediated transcription. May act as a transcriptional corepressor for NK homeodomain transcription factors. The phosphorylation of NR5A1 activates SF1 leading to increased steroidogenic gene expression upon cAMP signaling pathway stimulation. In osteoblasts, supports transcription activation: phosphorylates RUNX2 that synergizes with SPEN/MINT to enhance FGFR2-mediated activation of the osteocalcin FGF-responsive element (OCFRE).</text>
</comment>
<comment type="catalytic activity">
    <reaction>
        <text>L-seryl-[protein] + ATP = O-phospho-L-seryl-[protein] + ADP + H(+)</text>
        <dbReference type="Rhea" id="RHEA:17989"/>
        <dbReference type="Rhea" id="RHEA-COMP:9863"/>
        <dbReference type="Rhea" id="RHEA-COMP:11604"/>
        <dbReference type="ChEBI" id="CHEBI:15378"/>
        <dbReference type="ChEBI" id="CHEBI:29999"/>
        <dbReference type="ChEBI" id="CHEBI:30616"/>
        <dbReference type="ChEBI" id="CHEBI:83421"/>
        <dbReference type="ChEBI" id="CHEBI:456216"/>
        <dbReference type="EC" id="2.7.11.1"/>
    </reaction>
</comment>
<comment type="catalytic activity">
    <reaction>
        <text>L-threonyl-[protein] + ATP = O-phospho-L-threonyl-[protein] + ADP + H(+)</text>
        <dbReference type="Rhea" id="RHEA:46608"/>
        <dbReference type="Rhea" id="RHEA-COMP:11060"/>
        <dbReference type="Rhea" id="RHEA-COMP:11605"/>
        <dbReference type="ChEBI" id="CHEBI:15378"/>
        <dbReference type="ChEBI" id="CHEBI:30013"/>
        <dbReference type="ChEBI" id="CHEBI:30616"/>
        <dbReference type="ChEBI" id="CHEBI:61977"/>
        <dbReference type="ChEBI" id="CHEBI:456216"/>
        <dbReference type="EC" id="2.7.11.1"/>
    </reaction>
</comment>
<comment type="subunit">
    <text evidence="1 6 7 8 9 10">Interacts with UBL1/SUMO-1 (By similarity). Interacts with and stabilizes ligand-bound androgen receptor (AR). Interacts with Nkx1-2. Interacts with FAS and DAXX. Probably part of a complex consisting of HIPK3, FAS and FADD. Binds to NR5A1/SF1, SPEN/MINT and RUNX2.</text>
</comment>
<comment type="interaction">
    <interactant intactId="EBI-524356">
        <id>Q9ERH7</id>
    </interactant>
    <interactant intactId="EBI-296206">
        <id>P25446</id>
        <label>Fas</label>
    </interactant>
    <organismsDiffer>false</organismsDiffer>
    <experiments>3</experiments>
</comment>
<comment type="subcellular location">
    <subcellularLocation>
        <location>Cytoplasm</location>
    </subcellularLocation>
    <subcellularLocation>
        <location>Nucleus</location>
    </subcellularLocation>
</comment>
<comment type="tissue specificity">
    <text evidence="6">Heart, skeletal muscle, spleen, testis and lung.</text>
</comment>
<comment type="PTM">
    <text evidence="1">Autophosphorylated, but autophosphorylation is not required for catalytic activity.</text>
</comment>
<comment type="PTM">
    <text>May be sumoylated.</text>
</comment>
<comment type="similarity">
    <text evidence="11">Belongs to the protein kinase superfamily. CMGC Ser/Thr protein kinase family. HIPK subfamily.</text>
</comment>
<gene>
    <name type="primary">Hipk3</name>
    <name type="synonym">Fist3</name>
</gene>